<organism>
    <name type="scientific">Pongo abelii</name>
    <name type="common">Sumatran orangutan</name>
    <name type="synonym">Pongo pygmaeus abelii</name>
    <dbReference type="NCBI Taxonomy" id="9601"/>
    <lineage>
        <taxon>Eukaryota</taxon>
        <taxon>Metazoa</taxon>
        <taxon>Chordata</taxon>
        <taxon>Craniata</taxon>
        <taxon>Vertebrata</taxon>
        <taxon>Euteleostomi</taxon>
        <taxon>Mammalia</taxon>
        <taxon>Eutheria</taxon>
        <taxon>Euarchontoglires</taxon>
        <taxon>Primates</taxon>
        <taxon>Haplorrhini</taxon>
        <taxon>Catarrhini</taxon>
        <taxon>Hominidae</taxon>
        <taxon>Pongo</taxon>
    </lineage>
</organism>
<gene>
    <name type="primary">PSMA7</name>
</gene>
<keyword id="KW-0963">Cytoplasm</keyword>
<keyword id="KW-0325">Glycoprotein</keyword>
<keyword id="KW-0539">Nucleus</keyword>
<keyword id="KW-0597">Phosphoprotein</keyword>
<keyword id="KW-0647">Proteasome</keyword>
<keyword id="KW-1185">Reference proteome</keyword>
<evidence type="ECO:0000250" key="1"/>
<evidence type="ECO:0000250" key="2">
    <source>
        <dbReference type="UniProtKB" id="O14818"/>
    </source>
</evidence>
<evidence type="ECO:0000255" key="3">
    <source>
        <dbReference type="PROSITE-ProRule" id="PRU00808"/>
    </source>
</evidence>
<evidence type="ECO:0000305" key="4"/>
<name>PSA7_PONAB</name>
<reference key="1">
    <citation type="submission" date="2004-11" db="EMBL/GenBank/DDBJ databases">
        <authorList>
            <consortium name="The German cDNA consortium"/>
        </authorList>
    </citation>
    <scope>NUCLEOTIDE SEQUENCE [LARGE SCALE MRNA]</scope>
    <source>
        <tissue>Kidney</tissue>
    </source>
</reference>
<feature type="chain" id="PRO_0000276765" description="Proteasome subunit alpha type-7">
    <location>
        <begin position="1"/>
        <end position="248"/>
    </location>
</feature>
<feature type="modified residue" description="Phosphotyrosine" evidence="2">
    <location>
        <position position="153"/>
    </location>
</feature>
<feature type="glycosylation site" description="O-linked (GlcNAc) serine" evidence="1">
    <location>
        <position position="130"/>
    </location>
</feature>
<proteinExistence type="evidence at transcript level"/>
<sequence>MSYDRAITVFSPDGHLFQVEYAQEAIKKGSTAVGVRGRDIVVLGVEKKSVAKLQDERTVRKICALDDNVCMAFAGLTADARIVINRARVECQSHRLTVEDSVTVEYITRYIASLKQRYTQSNGRRPFGISALIVGFDFDGTPRLYQTDPSGTYHAWKANAIGRGAKSVREFLEKNYTDEAIETDDLTIKLVIKALLEVVQSGGKNIELAVMRRDQPLKILNPEEIEEYVAEIEKEKEENEKKKQKKAS</sequence>
<dbReference type="EMBL" id="CR857931">
    <property type="protein sequence ID" value="CAH90179.1"/>
    <property type="status" value="ALT_FRAME"/>
    <property type="molecule type" value="mRNA"/>
</dbReference>
<dbReference type="RefSeq" id="NP_001125062.1">
    <property type="nucleotide sequence ID" value="NM_001131590.1"/>
</dbReference>
<dbReference type="SMR" id="Q5RDH8"/>
<dbReference type="STRING" id="9601.ENSPPYP00000012509"/>
<dbReference type="GlyCosmos" id="Q5RDH8">
    <property type="glycosylation" value="1 site, No reported glycans"/>
</dbReference>
<dbReference type="GeneID" id="100171943"/>
<dbReference type="KEGG" id="pon:100171943"/>
<dbReference type="CTD" id="5688"/>
<dbReference type="eggNOG" id="KOG0183">
    <property type="taxonomic scope" value="Eukaryota"/>
</dbReference>
<dbReference type="InParanoid" id="Q5RDH8"/>
<dbReference type="OrthoDB" id="3145928at2759"/>
<dbReference type="Proteomes" id="UP000001595">
    <property type="component" value="Unplaced"/>
</dbReference>
<dbReference type="GO" id="GO:0005737">
    <property type="term" value="C:cytoplasm"/>
    <property type="evidence" value="ECO:0007669"/>
    <property type="project" value="UniProtKB-SubCell"/>
</dbReference>
<dbReference type="GO" id="GO:0005634">
    <property type="term" value="C:nucleus"/>
    <property type="evidence" value="ECO:0007669"/>
    <property type="project" value="UniProtKB-SubCell"/>
</dbReference>
<dbReference type="GO" id="GO:0005839">
    <property type="term" value="C:proteasome core complex"/>
    <property type="evidence" value="ECO:0000250"/>
    <property type="project" value="UniProtKB"/>
</dbReference>
<dbReference type="GO" id="GO:0019773">
    <property type="term" value="C:proteasome core complex, alpha-subunit complex"/>
    <property type="evidence" value="ECO:0000250"/>
    <property type="project" value="UniProtKB"/>
</dbReference>
<dbReference type="GO" id="GO:0006511">
    <property type="term" value="P:ubiquitin-dependent protein catabolic process"/>
    <property type="evidence" value="ECO:0007669"/>
    <property type="project" value="InterPro"/>
</dbReference>
<dbReference type="CDD" id="cd03755">
    <property type="entry name" value="proteasome_alpha_type_7"/>
    <property type="match status" value="1"/>
</dbReference>
<dbReference type="FunFam" id="3.60.20.10:FF:000018">
    <property type="entry name" value="Proteasome subunit alpha type"/>
    <property type="match status" value="1"/>
</dbReference>
<dbReference type="Gene3D" id="3.60.20.10">
    <property type="entry name" value="Glutamine Phosphoribosylpyrophosphate, subunit 1, domain 1"/>
    <property type="match status" value="1"/>
</dbReference>
<dbReference type="InterPro" id="IPR029055">
    <property type="entry name" value="Ntn_hydrolases_N"/>
</dbReference>
<dbReference type="InterPro" id="IPR050115">
    <property type="entry name" value="Proteasome_alpha"/>
</dbReference>
<dbReference type="InterPro" id="IPR023332">
    <property type="entry name" value="Proteasome_alpha-type"/>
</dbReference>
<dbReference type="InterPro" id="IPR000426">
    <property type="entry name" value="Proteasome_asu_N"/>
</dbReference>
<dbReference type="InterPro" id="IPR001353">
    <property type="entry name" value="Proteasome_sua/b"/>
</dbReference>
<dbReference type="NCBIfam" id="NF003075">
    <property type="entry name" value="PRK03996.1"/>
    <property type="match status" value="1"/>
</dbReference>
<dbReference type="PANTHER" id="PTHR11599">
    <property type="entry name" value="PROTEASOME SUBUNIT ALPHA/BETA"/>
    <property type="match status" value="1"/>
</dbReference>
<dbReference type="Pfam" id="PF00227">
    <property type="entry name" value="Proteasome"/>
    <property type="match status" value="1"/>
</dbReference>
<dbReference type="Pfam" id="PF10584">
    <property type="entry name" value="Proteasome_A_N"/>
    <property type="match status" value="1"/>
</dbReference>
<dbReference type="SMART" id="SM00948">
    <property type="entry name" value="Proteasome_A_N"/>
    <property type="match status" value="1"/>
</dbReference>
<dbReference type="SUPFAM" id="SSF56235">
    <property type="entry name" value="N-terminal nucleophile aminohydrolases (Ntn hydrolases)"/>
    <property type="match status" value="1"/>
</dbReference>
<dbReference type="PROSITE" id="PS00388">
    <property type="entry name" value="PROTEASOME_ALPHA_1"/>
    <property type="match status" value="1"/>
</dbReference>
<dbReference type="PROSITE" id="PS51475">
    <property type="entry name" value="PROTEASOME_ALPHA_2"/>
    <property type="match status" value="1"/>
</dbReference>
<accession>Q5RDH8</accession>
<protein>
    <recommendedName>
        <fullName>Proteasome subunit alpha type-7</fullName>
    </recommendedName>
</protein>
<comment type="function">
    <text evidence="2">Component of the 20S core proteasome complex involved in the proteolytic degradation of most intracellular proteins. This complex plays numerous essential roles within the cell by associating with different regulatory particles. Associated with two 19S regulatory particles, forms the 26S proteasome and thus participates in the ATP-dependent degradation of ubiquitinated proteins. The 26S proteasome plays a key role in the maintenance of protein homeostasis by removing misfolded or damaged proteins that could impair cellular functions, and by removing proteins whose functions are no longer required. Associated with the PA200 or PA28, the 20S proteasome mediates ubiquitin-independent protein degradation. This type of proteolysis is required in several pathways including spermatogenesis (20S-PA200 complex) or generation of a subset of MHC class I-presented antigenic peptides (20S-PA28 complex). Inhibits the transactivation function of HIF-1A under both normoxic and hypoxia-mimicking conditions. The interaction with EMAP2 increases the proteasome-mediated HIF-1A degradation under the hypoxic conditions. Plays a role in hepatitis C virus internal ribosome entry site-mediated translation. Mediates nuclear translocation of the androgen receptor (AR) and thereby enhances androgen-mediated transactivation. Promotes MAVS degradation and thereby negatively regulates MAVS-mediated innate immune response.</text>
</comment>
<comment type="subunit">
    <text evidence="2">The 26S proteasome consists of a 20S proteasome core and two 19S regulatory subunits. The 20S proteasome core is a barrel-shaped complex made of 28 subunits that are arranged in four stacked rings. The two outer rings are each formed by seven alpha subunits, and the two inner rings are formed by seven beta subunits. The proteolytic activity is exerted by three beta-subunits PSMB5, PSMB6 and PSMB7. PSMA7 interacts directly with the PSMG1-PSMG2 heterodimer which promotes 20S proteasome assembly. Interacts with HIF1A. Interacts with RAB7A. Interacts with PRKN. Interacts with ABL1 and ABL2. Interacts with EMAP2. Interacts with MAVS.</text>
</comment>
<comment type="subcellular location">
    <subcellularLocation>
        <location evidence="2">Cytoplasm</location>
    </subcellularLocation>
    <subcellularLocation>
        <location evidence="2">Nucleus</location>
    </subcellularLocation>
    <text evidence="2">Translocated from the cytoplasm into the nucleus following interaction with AKIRIN2, which bridges the proteasome with the nuclear import receptor IPO9.</text>
</comment>
<comment type="similarity">
    <text evidence="3">Belongs to the peptidase T1A family.</text>
</comment>
<comment type="sequence caution" evidence="4">
    <conflict type="frameshift">
        <sequence resource="EMBL-CDS" id="CAH90179"/>
    </conflict>
</comment>